<evidence type="ECO:0000256" key="1">
    <source>
        <dbReference type="SAM" id="MobiDB-lite"/>
    </source>
</evidence>
<evidence type="ECO:0000269" key="2">
    <source>
    </source>
</evidence>
<evidence type="ECO:0000269" key="3">
    <source>
    </source>
</evidence>
<evidence type="ECO:0000269" key="4">
    <source>
    </source>
</evidence>
<evidence type="ECO:0000269" key="5">
    <source>
    </source>
</evidence>
<evidence type="ECO:0000305" key="6"/>
<evidence type="ECO:0000312" key="7">
    <source>
        <dbReference type="Proteomes" id="UP000001940"/>
    </source>
</evidence>
<evidence type="ECO:0000312" key="8">
    <source>
        <dbReference type="WormBase" id="Y20F4.2"/>
    </source>
</evidence>
<reference evidence="7" key="1">
    <citation type="journal article" date="1998" name="Science">
        <title>Genome sequence of the nematode C. elegans: a platform for investigating biology.</title>
        <authorList>
            <consortium name="The C. elegans sequencing consortium"/>
        </authorList>
    </citation>
    <scope>NUCLEOTIDE SEQUENCE [LARGE SCALE GENOMIC DNA]</scope>
    <source>
        <strain evidence="7">Bristol N2</strain>
    </source>
</reference>
<reference evidence="6" key="2">
    <citation type="journal article" date="2011" name="Nature">
        <title>Lifespan extension induced by AMPK and calcineurin is mediated by CRTC-1 and CREB.</title>
        <authorList>
            <person name="Mair W."/>
            <person name="Morantte I."/>
            <person name="Rodrigues A.P."/>
            <person name="Manning G."/>
            <person name="Montminy M."/>
            <person name="Shaw R.J."/>
            <person name="Dillin A."/>
        </authorList>
    </citation>
    <scope>FUNCTION</scope>
    <scope>INTERACTION WITH CRH-1</scope>
    <scope>SUBCELLULAR LOCATION</scope>
    <scope>TISSUE SPECIFICITY</scope>
    <scope>PHOSPHORYLATION AT SER-76 AND SER-179</scope>
    <scope>DISRUPTION PHENOTYPE</scope>
    <scope>MUTAGENESIS OF SER-76; SER-179 AND 423-PRO--THR-428</scope>
</reference>
<reference evidence="6" key="3">
    <citation type="journal article" date="2015" name="Cell">
        <title>Neuronal CRTC-1 governs systemic mitochondrial metabolism and lifespan via a catecholamine signal.</title>
        <authorList>
            <person name="Burkewitz K."/>
            <person name="Morantte I."/>
            <person name="Weir H.J."/>
            <person name="Yeo R."/>
            <person name="Zhang Y."/>
            <person name="Huynh F.K."/>
            <person name="Ilkayeva O.R."/>
            <person name="Hirschey M.D."/>
            <person name="Grant A.R."/>
            <person name="Mair W.B."/>
        </authorList>
    </citation>
    <scope>FUNCTION</scope>
    <scope>TISSUE SPECIFICITY</scope>
</reference>
<reference key="4">
    <citation type="journal article" date="2015" name="J. Mol. Biol.">
        <title>Regulator of calcineurin (rcan-1) regulates thermotaxis behavior in Caenorhabditis elegans.</title>
        <authorList>
            <person name="Li W."/>
            <person name="Bell H.W."/>
            <person name="Ahnn J."/>
            <person name="Lee S.K."/>
        </authorList>
    </citation>
    <scope>SUBCELLULAR LOCATION</scope>
</reference>
<reference key="5">
    <citation type="journal article" date="2017" name="Aging Cell">
        <title>Transcription factors CEP-1/p53 and CEH-23 collaborate with AAK-2/AMPK to modulate longevity in Caenorhabditis elegans.</title>
        <authorList>
            <person name="Chang H.W."/>
            <person name="Pisano S."/>
            <person name="Chaturbedi A."/>
            <person name="Chen J."/>
            <person name="Gordon S."/>
            <person name="Baruah A."/>
            <person name="Lee S.S."/>
        </authorList>
    </citation>
    <scope>FUNCTION</scope>
    <scope>SUBCELLULAR LOCATION</scope>
</reference>
<accession>Q95XA8</accession>
<feature type="chain" id="PRO_0000433354" description="CREB-regulated transcription coactivator 1 homolog" evidence="6">
    <location>
        <begin position="1"/>
        <end position="486"/>
    </location>
</feature>
<feature type="region of interest" description="Disordered" evidence="1">
    <location>
        <begin position="1"/>
        <end position="62"/>
    </location>
</feature>
<feature type="region of interest" description="Disordered" evidence="1">
    <location>
        <begin position="103"/>
        <end position="166"/>
    </location>
</feature>
<feature type="region of interest" description="Disordered" evidence="1">
    <location>
        <begin position="214"/>
        <end position="278"/>
    </location>
</feature>
<feature type="region of interest" description="Disordered" evidence="1">
    <location>
        <begin position="327"/>
        <end position="417"/>
    </location>
</feature>
<feature type="region of interest" description="Disordered" evidence="1">
    <location>
        <begin position="460"/>
        <end position="486"/>
    </location>
</feature>
<feature type="compositionally biased region" description="Basic and acidic residues" evidence="1">
    <location>
        <begin position="9"/>
        <end position="23"/>
    </location>
</feature>
<feature type="compositionally biased region" description="Polar residues" evidence="1">
    <location>
        <begin position="34"/>
        <end position="52"/>
    </location>
</feature>
<feature type="compositionally biased region" description="Pro residues" evidence="1">
    <location>
        <begin position="144"/>
        <end position="160"/>
    </location>
</feature>
<feature type="compositionally biased region" description="Polar residues" evidence="1">
    <location>
        <begin position="224"/>
        <end position="245"/>
    </location>
</feature>
<feature type="compositionally biased region" description="Polar residues" evidence="1">
    <location>
        <begin position="387"/>
        <end position="402"/>
    </location>
</feature>
<feature type="compositionally biased region" description="Polar residues" evidence="1">
    <location>
        <begin position="461"/>
        <end position="475"/>
    </location>
</feature>
<feature type="modified residue" description="Phosphoserine; by AMPK" evidence="2">
    <location>
        <position position="76"/>
    </location>
</feature>
<feature type="modified residue" description="Phosphoserine; by AMPK" evidence="2">
    <location>
        <position position="179"/>
    </location>
</feature>
<feature type="mutagenesis site" description="Loss of phosphorylation. Leads to nuclear sequestration; when associated with A-179." evidence="2">
    <original>S</original>
    <variation>A</variation>
    <location>
        <position position="76"/>
    </location>
</feature>
<feature type="mutagenesis site" description="Loss of phosphorylation. Leads to nuclear sequestration; when associated with A-76." evidence="2">
    <original>S</original>
    <variation>A</variation>
    <location>
        <position position="179"/>
    </location>
</feature>
<feature type="mutagenesis site" description="Calcineurin binding site mutation. Loss of nuclear translocation in response to increased calcium influx." evidence="2">
    <original>PKLTIT</original>
    <variation>AKATAA</variation>
    <location>
        <begin position="423"/>
        <end position="428"/>
    </location>
</feature>
<organism evidence="7">
    <name type="scientific">Caenorhabditis elegans</name>
    <dbReference type="NCBI Taxonomy" id="6239"/>
    <lineage>
        <taxon>Eukaryota</taxon>
        <taxon>Metazoa</taxon>
        <taxon>Ecdysozoa</taxon>
        <taxon>Nematoda</taxon>
        <taxon>Chromadorea</taxon>
        <taxon>Rhabditida</taxon>
        <taxon>Rhabditina</taxon>
        <taxon>Rhabditomorpha</taxon>
        <taxon>Rhabditoidea</taxon>
        <taxon>Rhabditidae</taxon>
        <taxon>Peloderinae</taxon>
        <taxon>Caenorhabditis</taxon>
    </lineage>
</organism>
<keyword id="KW-0010">Activator</keyword>
<keyword id="KW-0963">Cytoplasm</keyword>
<keyword id="KW-0539">Nucleus</keyword>
<keyword id="KW-0597">Phosphoprotein</keyword>
<keyword id="KW-1185">Reference proteome</keyword>
<keyword id="KW-0804">Transcription</keyword>
<keyword id="KW-0805">Transcription regulation</keyword>
<dbReference type="EMBL" id="FO081781">
    <property type="protein sequence ID" value="CCD73417.2"/>
    <property type="molecule type" value="Genomic_DNA"/>
</dbReference>
<dbReference type="RefSeq" id="NP_490917.4">
    <property type="nucleotide sequence ID" value="NM_058516.5"/>
</dbReference>
<dbReference type="SMR" id="Q95XA8"/>
<dbReference type="DIP" id="DIP-59883N"/>
<dbReference type="FunCoup" id="Q95XA8">
    <property type="interactions" value="88"/>
</dbReference>
<dbReference type="IntAct" id="Q95XA8">
    <property type="interactions" value="3"/>
</dbReference>
<dbReference type="STRING" id="6239.Y20F4.2.2"/>
<dbReference type="iPTMnet" id="Q95XA8"/>
<dbReference type="PaxDb" id="6239-Y20F4.2"/>
<dbReference type="EnsemblMetazoa" id="Y20F4.2.1">
    <property type="protein sequence ID" value="Y20F4.2.1"/>
    <property type="gene ID" value="WBGene00021237"/>
</dbReference>
<dbReference type="GeneID" id="259368"/>
<dbReference type="KEGG" id="cel:CELE_Y20F4.2"/>
<dbReference type="UCSC" id="Y20F4.2">
    <property type="organism name" value="c. elegans"/>
</dbReference>
<dbReference type="AGR" id="WB:WBGene00021237"/>
<dbReference type="CTD" id="259368"/>
<dbReference type="WormBase" id="Y20F4.2">
    <property type="protein sequence ID" value="CE47164"/>
    <property type="gene ID" value="WBGene00021237"/>
    <property type="gene designation" value="crtc-1"/>
</dbReference>
<dbReference type="eggNOG" id="ENOG502SAC7">
    <property type="taxonomic scope" value="Eukaryota"/>
</dbReference>
<dbReference type="GeneTree" id="ENSGT00390000010652"/>
<dbReference type="HOGENOM" id="CLU_594810_0_0_1"/>
<dbReference type="InParanoid" id="Q95XA8"/>
<dbReference type="OMA" id="TTHYHPY"/>
<dbReference type="OrthoDB" id="8947034at2759"/>
<dbReference type="PRO" id="PR:Q95XA8"/>
<dbReference type="Proteomes" id="UP000001940">
    <property type="component" value="Chromosome I"/>
</dbReference>
<dbReference type="Bgee" id="WBGene00021237">
    <property type="expression patterns" value="Expressed in pharyngeal muscle cell (C elegans) and 3 other cell types or tissues"/>
</dbReference>
<dbReference type="GO" id="GO:0005737">
    <property type="term" value="C:cytoplasm"/>
    <property type="evidence" value="ECO:0000314"/>
    <property type="project" value="WormBase"/>
</dbReference>
<dbReference type="GO" id="GO:0005829">
    <property type="term" value="C:cytosol"/>
    <property type="evidence" value="ECO:0000314"/>
    <property type="project" value="WormBase"/>
</dbReference>
<dbReference type="GO" id="GO:0005634">
    <property type="term" value="C:nucleus"/>
    <property type="evidence" value="ECO:0000314"/>
    <property type="project" value="WormBase"/>
</dbReference>
<dbReference type="GO" id="GO:0008140">
    <property type="term" value="F:cAMP response element binding protein binding"/>
    <property type="evidence" value="ECO:0000353"/>
    <property type="project" value="WormBase"/>
</dbReference>
<dbReference type="GO" id="GO:0003713">
    <property type="term" value="F:transcription coactivator activity"/>
    <property type="evidence" value="ECO:0000318"/>
    <property type="project" value="GO_Central"/>
</dbReference>
<dbReference type="GO" id="GO:0071320">
    <property type="term" value="P:cellular response to cAMP"/>
    <property type="evidence" value="ECO:0000318"/>
    <property type="project" value="GO_Central"/>
</dbReference>
<dbReference type="GO" id="GO:0008340">
    <property type="term" value="P:determination of adult lifespan"/>
    <property type="evidence" value="ECO:0000315"/>
    <property type="project" value="WormBase"/>
</dbReference>
<dbReference type="GO" id="GO:0045944">
    <property type="term" value="P:positive regulation of transcription by RNA polymerase II"/>
    <property type="evidence" value="ECO:0000318"/>
    <property type="project" value="GO_Central"/>
</dbReference>
<dbReference type="GO" id="GO:0051289">
    <property type="term" value="P:protein homotetramerization"/>
    <property type="evidence" value="ECO:0007669"/>
    <property type="project" value="InterPro"/>
</dbReference>
<dbReference type="InterPro" id="IPR024786">
    <property type="entry name" value="TORC"/>
</dbReference>
<dbReference type="InterPro" id="IPR024783">
    <property type="entry name" value="TORC_N"/>
</dbReference>
<dbReference type="PANTHER" id="PTHR13589">
    <property type="entry name" value="CREB-REGULATED TRANSCRIPTION COACTIVATOR"/>
    <property type="match status" value="1"/>
</dbReference>
<dbReference type="PANTHER" id="PTHR13589:SF15">
    <property type="entry name" value="CREB-REGULATED TRANSCRIPTION COACTIVATOR, ISOFORM B"/>
    <property type="match status" value="1"/>
</dbReference>
<dbReference type="Pfam" id="PF12884">
    <property type="entry name" value="TORC_N"/>
    <property type="match status" value="1"/>
</dbReference>
<name>CRTC1_CAEEL</name>
<gene>
    <name evidence="8" type="primary">crtc-1</name>
    <name evidence="8" type="ORF">Y20F4.2</name>
</gene>
<sequence>MSNSNTPRKFSEKIAILERKQNEENTTFEDIMRQVQSITHHPTDSSGSSTATAPMPIPQQGLLPPQQPWGHNLGGSLPNVHQMPSYSPPQWPPNWQHEIQHRPIQGHRSRSPEDHMIGSASGSPSHHYHPYGMRSNGLSRSPDRTPPQHPQYTPYGPPYNQPGQLVPPESWNQINRARSDPAIHNMGGMVPMHPHHHQQQQMAFHQMPHYLQNSMPGPSGMMAPNSQSQQHSPQLTPQGSQQGSPVQMHHQIPPPLQMGNNQQMGGGNNGMSPLQSPNHMMTPMYGYHNGSPLHSPMDSPHASTLMLDGSGTPSPYMEVSPPGMHDFNQDAGSLPNLQNVQQQQQQQQEIYTNGGAPGGGYYHAPIGPRHSTGACGPRLVPGPALTPESQSAPTSPHNQLDPNQPPMWPTRTFSNSPEALDIPKLTITNAEGAPGHHVDSYNDFNDLGLDSLDSVLCNGAPPQTISNHQTPNNSFHDPGGTQMLQN</sequence>
<proteinExistence type="evidence at protein level"/>
<protein>
    <recommendedName>
        <fullName evidence="8">CREB-regulated transcription coactivator 1 homolog</fullName>
    </recommendedName>
</protein>
<comment type="function">
    <text evidence="2 3">Transcriptional coactivator for crh-1, the homolog of vertebrate transcription factor CREB1 (PubMed:21331044). Regulates the transcription of metabolic genes and may have a role in mitochondrial dynamics and metabolism (PubMed:25723162). Involved in modulation of lifespan (PubMed:21331044, PubMed:25723162, PubMed:28560849). Through crh-1, counteracts the pro-lifespan-extension signals of AMPK both cell autonomously and, when expressed in neurons, at a systemic level, possibly using the catecholamine analog, octopamine, as a messenger (PubMed:21331044, PubMed:25723162).</text>
</comment>
<comment type="subunit">
    <text evidence="2">Interacts with crh-1.</text>
</comment>
<comment type="subcellular location">
    <subcellularLocation>
        <location evidence="2 4 5">Nucleus</location>
    </subcellularLocation>
    <subcellularLocation>
        <location evidence="2 5">Cytoplasm</location>
        <location evidence="2 5">Cytosol</location>
    </subcellularLocation>
    <text evidence="2 4">Localization is phosphorylation-dependent with the phosphorylated form translocating to the cytosol (PubMed:21331044). Cytosolic sequestration requires 14-3-3 proteins fft-1 and fft-2 (PubMed:21331044). Cytosolic sequestration is partially dependent upon mitochondrial electron transport complex III component isp-1, perhaps as a result of a retrograde signaling pathway relaying signals from mitochondria to the nucleus (PubMed:28560849). Nuclear localization may in part depend on activity of the calcineurin subunit tax-6 and its regulator rcan-1 in response to changes in intracellular calcium levels (PubMed:26232604).</text>
</comment>
<comment type="tissue specificity">
    <text evidence="2 3">Expressed throughout the intestine and in head and tail neurons (PubMed:21331044). Expressed in octopaminergic RIC neurons (PubMed:25723162).</text>
</comment>
<comment type="PTM">
    <text evidence="2">Phosphorylated by AMPK at Ser-76 and Ser-179. Dephosphorylated by tax-6, the catalytic subunit of calcineurin.</text>
</comment>
<comment type="disruption phenotype">
    <text evidence="2">RNAi-mediated knock-down results in increased lifespan.</text>
</comment>
<comment type="similarity">
    <text evidence="6">Belongs to the TORC family.</text>
</comment>